<accession>B8J856</accession>
<dbReference type="EMBL" id="CP001359">
    <property type="protein sequence ID" value="ACL65355.1"/>
    <property type="molecule type" value="Genomic_DNA"/>
</dbReference>
<dbReference type="RefSeq" id="WP_011421003.1">
    <property type="nucleotide sequence ID" value="NC_011891.1"/>
</dbReference>
<dbReference type="SMR" id="B8J856"/>
<dbReference type="KEGG" id="acp:A2cp1_2014"/>
<dbReference type="HOGENOM" id="CLU_104295_1_2_7"/>
<dbReference type="Proteomes" id="UP000007089">
    <property type="component" value="Chromosome"/>
</dbReference>
<dbReference type="GO" id="GO:0015935">
    <property type="term" value="C:small ribosomal subunit"/>
    <property type="evidence" value="ECO:0007669"/>
    <property type="project" value="InterPro"/>
</dbReference>
<dbReference type="GO" id="GO:0019843">
    <property type="term" value="F:rRNA binding"/>
    <property type="evidence" value="ECO:0007669"/>
    <property type="project" value="UniProtKB-UniRule"/>
</dbReference>
<dbReference type="GO" id="GO:0003735">
    <property type="term" value="F:structural constituent of ribosome"/>
    <property type="evidence" value="ECO:0007669"/>
    <property type="project" value="InterPro"/>
</dbReference>
<dbReference type="GO" id="GO:0000049">
    <property type="term" value="F:tRNA binding"/>
    <property type="evidence" value="ECO:0007669"/>
    <property type="project" value="UniProtKB-UniRule"/>
</dbReference>
<dbReference type="GO" id="GO:0006412">
    <property type="term" value="P:translation"/>
    <property type="evidence" value="ECO:0007669"/>
    <property type="project" value="UniProtKB-UniRule"/>
</dbReference>
<dbReference type="CDD" id="cd03368">
    <property type="entry name" value="Ribosomal_S12"/>
    <property type="match status" value="1"/>
</dbReference>
<dbReference type="FunFam" id="2.40.50.140:FF:000001">
    <property type="entry name" value="30S ribosomal protein S12"/>
    <property type="match status" value="1"/>
</dbReference>
<dbReference type="Gene3D" id="2.40.50.140">
    <property type="entry name" value="Nucleic acid-binding proteins"/>
    <property type="match status" value="1"/>
</dbReference>
<dbReference type="HAMAP" id="MF_00403_B">
    <property type="entry name" value="Ribosomal_uS12_B"/>
    <property type="match status" value="1"/>
</dbReference>
<dbReference type="InterPro" id="IPR012340">
    <property type="entry name" value="NA-bd_OB-fold"/>
</dbReference>
<dbReference type="InterPro" id="IPR006032">
    <property type="entry name" value="Ribosomal_uS12"/>
</dbReference>
<dbReference type="InterPro" id="IPR005679">
    <property type="entry name" value="Ribosomal_uS12_bac"/>
</dbReference>
<dbReference type="NCBIfam" id="TIGR00981">
    <property type="entry name" value="rpsL_bact"/>
    <property type="match status" value="1"/>
</dbReference>
<dbReference type="PANTHER" id="PTHR11652">
    <property type="entry name" value="30S RIBOSOMAL PROTEIN S12 FAMILY MEMBER"/>
    <property type="match status" value="1"/>
</dbReference>
<dbReference type="Pfam" id="PF00164">
    <property type="entry name" value="Ribosom_S12_S23"/>
    <property type="match status" value="1"/>
</dbReference>
<dbReference type="PIRSF" id="PIRSF002133">
    <property type="entry name" value="Ribosomal_S12/S23"/>
    <property type="match status" value="1"/>
</dbReference>
<dbReference type="PRINTS" id="PR01034">
    <property type="entry name" value="RIBOSOMALS12"/>
</dbReference>
<dbReference type="SUPFAM" id="SSF50249">
    <property type="entry name" value="Nucleic acid-binding proteins"/>
    <property type="match status" value="1"/>
</dbReference>
<dbReference type="PROSITE" id="PS00055">
    <property type="entry name" value="RIBOSOMAL_S12"/>
    <property type="match status" value="1"/>
</dbReference>
<proteinExistence type="inferred from homology"/>
<organism>
    <name type="scientific">Anaeromyxobacter dehalogenans (strain 2CP-1 / ATCC BAA-258)</name>
    <dbReference type="NCBI Taxonomy" id="455488"/>
    <lineage>
        <taxon>Bacteria</taxon>
        <taxon>Pseudomonadati</taxon>
        <taxon>Myxococcota</taxon>
        <taxon>Myxococcia</taxon>
        <taxon>Myxococcales</taxon>
        <taxon>Cystobacterineae</taxon>
        <taxon>Anaeromyxobacteraceae</taxon>
        <taxon>Anaeromyxobacter</taxon>
    </lineage>
</organism>
<evidence type="ECO:0000250" key="1"/>
<evidence type="ECO:0000255" key="2">
    <source>
        <dbReference type="HAMAP-Rule" id="MF_00403"/>
    </source>
</evidence>
<evidence type="ECO:0000305" key="3"/>
<comment type="function">
    <text evidence="2">With S4 and S5 plays an important role in translational accuracy.</text>
</comment>
<comment type="function">
    <text evidence="2">Interacts with and stabilizes bases of the 16S rRNA that are involved in tRNA selection in the A site and with the mRNA backbone. Located at the interface of the 30S and 50S subunits, it traverses the body of the 30S subunit contacting proteins on the other side and probably holding the rRNA structure together. The combined cluster of proteins S8, S12 and S17 appears to hold together the shoulder and platform of the 30S subunit.</text>
</comment>
<comment type="subunit">
    <text evidence="2">Part of the 30S ribosomal subunit. Contacts proteins S8 and S17. May interact with IF1 in the 30S initiation complex.</text>
</comment>
<comment type="similarity">
    <text evidence="2">Belongs to the universal ribosomal protein uS12 family.</text>
</comment>
<keyword id="KW-0488">Methylation</keyword>
<keyword id="KW-0687">Ribonucleoprotein</keyword>
<keyword id="KW-0689">Ribosomal protein</keyword>
<keyword id="KW-0694">RNA-binding</keyword>
<keyword id="KW-0699">rRNA-binding</keyword>
<keyword id="KW-0820">tRNA-binding</keyword>
<reference key="1">
    <citation type="submission" date="2009-01" db="EMBL/GenBank/DDBJ databases">
        <title>Complete sequence of Anaeromyxobacter dehalogenans 2CP-1.</title>
        <authorList>
            <person name="Lucas S."/>
            <person name="Copeland A."/>
            <person name="Lapidus A."/>
            <person name="Glavina del Rio T."/>
            <person name="Dalin E."/>
            <person name="Tice H."/>
            <person name="Bruce D."/>
            <person name="Goodwin L."/>
            <person name="Pitluck S."/>
            <person name="Saunders E."/>
            <person name="Brettin T."/>
            <person name="Detter J.C."/>
            <person name="Han C."/>
            <person name="Larimer F."/>
            <person name="Land M."/>
            <person name="Hauser L."/>
            <person name="Kyrpides N."/>
            <person name="Ovchinnikova G."/>
            <person name="Beliaev A.S."/>
            <person name="Richardson P."/>
        </authorList>
    </citation>
    <scope>NUCLEOTIDE SEQUENCE [LARGE SCALE GENOMIC DNA]</scope>
    <source>
        <strain>2CP-1 / ATCC BAA-258</strain>
    </source>
</reference>
<feature type="chain" id="PRO_1000194115" description="Small ribosomal subunit protein uS12">
    <location>
        <begin position="1"/>
        <end position="123"/>
    </location>
</feature>
<feature type="modified residue" description="3-methylthioaspartic acid" evidence="1">
    <location>
        <position position="89"/>
    </location>
</feature>
<protein>
    <recommendedName>
        <fullName evidence="2">Small ribosomal subunit protein uS12</fullName>
    </recommendedName>
    <alternativeName>
        <fullName evidence="3">30S ribosomal protein S12</fullName>
    </alternativeName>
</protein>
<name>RS12_ANAD2</name>
<sequence>MPTISQLVRRGRERLQVKKKAPALKESPQKRGVCTRVYTTTPKKPNSALRKVARVRLTNGFEVTSYIPGVGHNLQEHSVVLIRGGRVKDLPGVRYHIIRGTLDAVGVQGRKQGRSKYGAKRAS</sequence>
<gene>
    <name evidence="2" type="primary">rpsL</name>
    <name type="ordered locus">A2cp1_2014</name>
</gene>